<keyword id="KW-0349">Heme</keyword>
<keyword id="KW-0408">Iron</keyword>
<keyword id="KW-0472">Membrane</keyword>
<keyword id="KW-0479">Metal-binding</keyword>
<keyword id="KW-0503">Monooxygenase</keyword>
<keyword id="KW-0560">Oxidoreductase</keyword>
<keyword id="KW-0812">Transmembrane</keyword>
<keyword id="KW-1133">Transmembrane helix</keyword>
<accession>I3PFJ5</accession>
<comment type="function">
    <text evidence="3">Converts L-DOPA to cyclo-DOPA in the betalain pathway. Provides the cyclo-DOPA moiety of all red betacyanins.</text>
</comment>
<comment type="cofactor">
    <cofactor evidence="1">
        <name>heme</name>
        <dbReference type="ChEBI" id="CHEBI:30413"/>
    </cofactor>
</comment>
<comment type="pathway">
    <text evidence="7">Pigment biosynthesis; betalain biosynthesis.</text>
</comment>
<comment type="subcellular location">
    <subcellularLocation>
        <location evidence="2">Membrane</location>
        <topology evidence="2">Single-pass membrane protein</topology>
    </subcellularLocation>
</comment>
<comment type="induction">
    <text evidence="4">Regulated by MYB1.</text>
</comment>
<comment type="miscellaneous">
    <text evidence="3">A frameshift mutant replacing 108 native amino acids with 27 new residues followed by a stop codon results in an inactive protein (AC P0DKI2) and a yellow mutant phenotype.</text>
</comment>
<comment type="similarity">
    <text evidence="7">Belongs to the cytochrome P450 family.</text>
</comment>
<sequence length="497" mass="56212">MDHATLAMILAIWFISFHFIKLLFSQQTTKLLPPGPKPLPIIGNILEVGKKPHRSFANLAKIHGPLISLRLGSVTTIVVSSADVAKEMFLKKDHPLSNRTIPNSVTAGDHHKLTMSWLPVSPKWRNFRKITAVHLLSPQRLDACQTFRHAKVQQLYEYVQECAQKGQAVDIGKAAFTTSLNLLSKLFFSVELAHHKSHTSQEFKELIWNIMEDIGKPNYADYFPILGCVDPSGIRRRLACSFDKLIAVFQGIICERLAPDSSTTTTTTTDDVLDVLLQLFKQNELTMGEINHLLVDIFDAGTDTTSSTFEWVMTELIRNPEMMEKAQEEIKQVLGKDKQIQESDIINLPYLQAIIKETLRLHPPTVFLLPRKADTDVELYGYIVPKDAQILVNLWAIGRDPNAWQNADIFSPERFIGCEIDVKGRDFGLLPFGAGRRICPGMNLAIRMLTLMLATLLQFFNWKLEGDISPKDLDMDEKFGIALQKTKPLKLIPIPRY</sequence>
<reference key="1">
    <citation type="journal article" date="2012" name="Nat. Genet.">
        <title>The beet R locus encodes a new cytochrome P450 required for red betalain production.</title>
        <authorList>
            <person name="Hatlestad G.J."/>
            <person name="Sunnadeniya R.M."/>
            <person name="Akhavan N.A."/>
            <person name="Gonzalez A."/>
            <person name="Goldman I.L."/>
            <person name="McGrath J.M."/>
            <person name="Lloyd A.M."/>
        </authorList>
    </citation>
    <scope>NUCLEOTIDE SEQUENCE [MRNA]</scope>
    <scope>FUNCTION</scope>
    <source>
        <strain>cv. C869</strain>
        <strain>cv. W357B</strain>
    </source>
</reference>
<reference key="2">
    <citation type="journal article" date="2014" name="BMC Plant Biol.">
        <title>Genome-wide identification and characterisation of R2R3-MYB genes in sugar beet (Beta vulgaris).</title>
        <authorList>
            <person name="Stracke R."/>
            <person name="Holtgrawe D."/>
            <person name="Schneider J."/>
            <person name="Pucker B."/>
            <person name="Rosleff Sorensen T."/>
            <person name="Weisshaar B."/>
        </authorList>
    </citation>
    <scope>NOMENCLATURE</scope>
    <source>
        <strain>cv. KWS2320</strain>
    </source>
</reference>
<reference key="3">
    <citation type="journal article" date="2015" name="Nat. Genet.">
        <title>The beet Y locus encodes an anthocyanin MYB-like protein that activates the betalain red pigment pathway.</title>
        <authorList>
            <person name="Hatlestad G.J."/>
            <person name="Akhavan N.A."/>
            <person name="Sunnadeniya R.M."/>
            <person name="Elam L."/>
            <person name="Cargile S."/>
            <person name="Hembd A."/>
            <person name="Gonzalez A."/>
            <person name="McGrath J.M."/>
            <person name="Lloyd A.M."/>
        </authorList>
    </citation>
    <scope>INDUCTION</scope>
</reference>
<organism evidence="8">
    <name type="scientific">Beta vulgaris</name>
    <name type="common">Sugar beet</name>
    <dbReference type="NCBI Taxonomy" id="161934"/>
    <lineage>
        <taxon>Eukaryota</taxon>
        <taxon>Viridiplantae</taxon>
        <taxon>Streptophyta</taxon>
        <taxon>Embryophyta</taxon>
        <taxon>Tracheophyta</taxon>
        <taxon>Spermatophyta</taxon>
        <taxon>Magnoliopsida</taxon>
        <taxon>eudicotyledons</taxon>
        <taxon>Gunneridae</taxon>
        <taxon>Pentapetalae</taxon>
        <taxon>Caryophyllales</taxon>
        <taxon>Chenopodiaceae</taxon>
        <taxon>Betoideae</taxon>
        <taxon>Beta</taxon>
    </lineage>
</organism>
<gene>
    <name evidence="5" type="primary">CYP76AD1</name>
    <name evidence="6" type="synonym">Bv2g029890_ucyh</name>
    <name evidence="6" type="synonym">Bv_ucyh</name>
</gene>
<feature type="chain" id="PRO_0000431983" description="Cytochrome P450 76AD1">
    <location>
        <begin position="1"/>
        <end position="497"/>
    </location>
</feature>
<feature type="transmembrane region" description="Helical" evidence="2">
    <location>
        <begin position="4"/>
        <end position="24"/>
    </location>
</feature>
<feature type="binding site" description="axial binding residue" evidence="1">
    <location>
        <position position="439"/>
    </location>
    <ligand>
        <name>heme</name>
        <dbReference type="ChEBI" id="CHEBI:30413"/>
    </ligand>
    <ligandPart>
        <name>Fe</name>
        <dbReference type="ChEBI" id="CHEBI:18248"/>
    </ligandPart>
</feature>
<name>C76AD_BETVU</name>
<dbReference type="EC" id="1.14.-.-" evidence="7"/>
<dbReference type="EMBL" id="HQ656023">
    <property type="protein sequence ID" value="AET43289.1"/>
    <property type="molecule type" value="mRNA"/>
</dbReference>
<dbReference type="EMBL" id="HQ656024">
    <property type="protein sequence ID" value="AET43290.1"/>
    <property type="molecule type" value="mRNA"/>
</dbReference>
<dbReference type="SMR" id="I3PFJ5"/>
<dbReference type="KEGG" id="ag:AET43289"/>
<dbReference type="UniPathway" id="UPA00278"/>
<dbReference type="GO" id="GO:0016020">
    <property type="term" value="C:membrane"/>
    <property type="evidence" value="ECO:0007669"/>
    <property type="project" value="UniProtKB-SubCell"/>
</dbReference>
<dbReference type="GO" id="GO:0020037">
    <property type="term" value="F:heme binding"/>
    <property type="evidence" value="ECO:0007669"/>
    <property type="project" value="InterPro"/>
</dbReference>
<dbReference type="GO" id="GO:0005506">
    <property type="term" value="F:iron ion binding"/>
    <property type="evidence" value="ECO:0007669"/>
    <property type="project" value="InterPro"/>
</dbReference>
<dbReference type="GO" id="GO:0004497">
    <property type="term" value="F:monooxygenase activity"/>
    <property type="evidence" value="ECO:0007669"/>
    <property type="project" value="UniProtKB-KW"/>
</dbReference>
<dbReference type="GO" id="GO:0016705">
    <property type="term" value="F:oxidoreductase activity, acting on paired donors, with incorporation or reduction of molecular oxygen"/>
    <property type="evidence" value="ECO:0007669"/>
    <property type="project" value="InterPro"/>
</dbReference>
<dbReference type="CDD" id="cd11073">
    <property type="entry name" value="CYP76-like"/>
    <property type="match status" value="1"/>
</dbReference>
<dbReference type="FunFam" id="1.10.630.10:FF:000007">
    <property type="entry name" value="Cytochrome P450 76C4"/>
    <property type="match status" value="1"/>
</dbReference>
<dbReference type="Gene3D" id="1.10.630.10">
    <property type="entry name" value="Cytochrome P450"/>
    <property type="match status" value="1"/>
</dbReference>
<dbReference type="InterPro" id="IPR001128">
    <property type="entry name" value="Cyt_P450"/>
</dbReference>
<dbReference type="InterPro" id="IPR017972">
    <property type="entry name" value="Cyt_P450_CS"/>
</dbReference>
<dbReference type="InterPro" id="IPR002401">
    <property type="entry name" value="Cyt_P450_E_grp-I"/>
</dbReference>
<dbReference type="InterPro" id="IPR036396">
    <property type="entry name" value="Cyt_P450_sf"/>
</dbReference>
<dbReference type="PANTHER" id="PTHR47950:SF12">
    <property type="entry name" value="CYTOCHROME P450 76AD1-LIKE"/>
    <property type="match status" value="1"/>
</dbReference>
<dbReference type="PANTHER" id="PTHR47950">
    <property type="entry name" value="CYTOCHROME P450, FAMILY 76, SUBFAMILY C, POLYPEPTIDE 5-RELATED"/>
    <property type="match status" value="1"/>
</dbReference>
<dbReference type="Pfam" id="PF00067">
    <property type="entry name" value="p450"/>
    <property type="match status" value="1"/>
</dbReference>
<dbReference type="PRINTS" id="PR00463">
    <property type="entry name" value="EP450I"/>
</dbReference>
<dbReference type="PRINTS" id="PR00385">
    <property type="entry name" value="P450"/>
</dbReference>
<dbReference type="SUPFAM" id="SSF48264">
    <property type="entry name" value="Cytochrome P450"/>
    <property type="match status" value="1"/>
</dbReference>
<dbReference type="PROSITE" id="PS00086">
    <property type="entry name" value="CYTOCHROME_P450"/>
    <property type="match status" value="1"/>
</dbReference>
<evidence type="ECO:0000250" key="1"/>
<evidence type="ECO:0000255" key="2"/>
<evidence type="ECO:0000269" key="3">
    <source>
    </source>
</evidence>
<evidence type="ECO:0000269" key="4">
    <source>
    </source>
</evidence>
<evidence type="ECO:0000303" key="5">
    <source>
    </source>
</evidence>
<evidence type="ECO:0000303" key="6">
    <source>
    </source>
</evidence>
<evidence type="ECO:0000305" key="7"/>
<evidence type="ECO:0000312" key="8">
    <source>
        <dbReference type="EMBL" id="AET43289.1"/>
    </source>
</evidence>
<proteinExistence type="evidence at transcript level"/>
<protein>
    <recommendedName>
        <fullName evidence="5">Cytochrome P450 76AD1</fullName>
        <ecNumber evidence="7">1.14.-.-</ecNumber>
    </recommendedName>
</protein>